<sequence>MVVIGEKFPEVEVKTTHGVIKLPDYFAEQGKWFVLFSHPADFTPVCTTEFYAMQKRVDQFRELGVEPIGLSVDQVFSHIKWMEWIKENLGEEITFPVIADDRGELADKLGMIPSGATITARAVFIVDDKGIIRAIVYYPAEVGRDWDEILRLVKALKVSDEKGVALPHKWPNNELIGDKAIVPPASTVDEVKQREEAKAKGEIECYDWWFCYKKLE</sequence>
<protein>
    <recommendedName>
        <fullName evidence="1">Peroxiredoxin</fullName>
        <ecNumber evidence="1">1.11.1.24</ecNumber>
    </recommendedName>
    <alternativeName>
        <fullName evidence="1">Thioredoxin peroxidase</fullName>
    </alternativeName>
    <alternativeName>
        <fullName evidence="1">Thioredoxin-dependent peroxiredoxin</fullName>
    </alternativeName>
</protein>
<reference key="1">
    <citation type="journal article" date="2005" name="Genome Res.">
        <title>Complete genome sequence of the hyperthermophilic archaeon Thermococcus kodakaraensis KOD1 and comparison with Pyrococcus genomes.</title>
        <authorList>
            <person name="Fukui T."/>
            <person name="Atomi H."/>
            <person name="Kanai T."/>
            <person name="Matsumi R."/>
            <person name="Fujiwara S."/>
            <person name="Imanaka T."/>
        </authorList>
    </citation>
    <scope>NUCLEOTIDE SEQUENCE [LARGE SCALE GENOMIC DNA]</scope>
    <source>
        <strain>ATCC BAA-918 / JCM 12380 / KOD1</strain>
    </source>
</reference>
<reference key="2">
    <citation type="journal article" date="2002" name="J. Biol. Chem.">
        <title>A novel candidate for the true fructose-1,6-bisphosphatase in archaea.</title>
        <authorList>
            <person name="Rashid N."/>
            <person name="Imanaka H."/>
            <person name="Kanai T."/>
            <person name="Fukui T."/>
            <person name="Atomi H."/>
            <person name="Imanaka T."/>
        </authorList>
    </citation>
    <scope>PROTEIN SEQUENCE OF 2-16</scope>
    <source>
        <strain>ATCC BAA-918 / JCM 12380 / KOD1</strain>
    </source>
</reference>
<evidence type="ECO:0000255" key="1">
    <source>
        <dbReference type="HAMAP-Rule" id="MF_00401"/>
    </source>
</evidence>
<evidence type="ECO:0007829" key="2">
    <source>
        <dbReference type="PDB" id="6IU0"/>
    </source>
</evidence>
<evidence type="ECO:0007829" key="3">
    <source>
        <dbReference type="PDB" id="8HH0"/>
    </source>
</evidence>
<gene>
    <name type="ordered locus">TK0537</name>
</gene>
<comment type="function">
    <text evidence="1">Thiol-specific peroxidase that catalyzes the reduction of hydrogen peroxide and organic hydroperoxides to water and alcohols, respectively. Plays a role in cell protection against oxidative stress by detoxifying peroxides.</text>
</comment>
<comment type="catalytic activity">
    <reaction evidence="1">
        <text>a hydroperoxide + [thioredoxin]-dithiol = an alcohol + [thioredoxin]-disulfide + H2O</text>
        <dbReference type="Rhea" id="RHEA:62620"/>
        <dbReference type="Rhea" id="RHEA-COMP:10698"/>
        <dbReference type="Rhea" id="RHEA-COMP:10700"/>
        <dbReference type="ChEBI" id="CHEBI:15377"/>
        <dbReference type="ChEBI" id="CHEBI:29950"/>
        <dbReference type="ChEBI" id="CHEBI:30879"/>
        <dbReference type="ChEBI" id="CHEBI:35924"/>
        <dbReference type="ChEBI" id="CHEBI:50058"/>
        <dbReference type="EC" id="1.11.1.24"/>
    </reaction>
</comment>
<comment type="subunit">
    <text evidence="1">Homodecamer. Pentamer of dimers that assemble into a ring structure.</text>
</comment>
<comment type="subcellular location">
    <subcellularLocation>
        <location evidence="1">Cytoplasm</location>
    </subcellularLocation>
</comment>
<comment type="miscellaneous">
    <text evidence="1">The active site is a conserved redox-active cysteine residue, the peroxidatic cysteine (C(P)), which makes the nucleophilic attack on the peroxide substrate. The peroxide oxidizes the C(P)-SH to cysteine sulfenic acid (C(P)-SOH), which then reacts with another cysteine residue, the resolving cysteine (C(R)), to form a disulfide bridge. The disulfide is subsequently reduced by an appropriate electron donor to complete the catalytic cycle. Although the primary sequence of this enzyme is similar to those of the 1-Cys Prx6 enzymes, its catalytic properties resemble those of the typical 2-Cys Prxs and C(R) is provided by the other dimeric subunit to form an intersubunit disulfide. The disulfide is subsequently reduced by thioredoxin.</text>
</comment>
<comment type="similarity">
    <text evidence="1">Belongs to the peroxiredoxin family. Prx6 subfamily.</text>
</comment>
<dbReference type="EC" id="1.11.1.24" evidence="1"/>
<dbReference type="EMBL" id="AP006878">
    <property type="protein sequence ID" value="BAD84726.1"/>
    <property type="molecule type" value="Genomic_DNA"/>
</dbReference>
<dbReference type="RefSeq" id="WP_011249492.1">
    <property type="nucleotide sequence ID" value="NC_006624.1"/>
</dbReference>
<dbReference type="PDB" id="6ITZ">
    <property type="method" value="X-ray"/>
    <property type="resolution" value="2.96 A"/>
    <property type="chains" value="A/B=1-216"/>
</dbReference>
<dbReference type="PDB" id="6IU0">
    <property type="method" value="X-ray"/>
    <property type="resolution" value="2.38 A"/>
    <property type="chains" value="A/B=1-216"/>
</dbReference>
<dbReference type="PDB" id="8HH0">
    <property type="method" value="X-ray"/>
    <property type="resolution" value="2.35 A"/>
    <property type="chains" value="A/B=1-216"/>
</dbReference>
<dbReference type="PDB" id="8HLA">
    <property type="method" value="EM"/>
    <property type="resolution" value="2.81 A"/>
    <property type="chains" value="A/B/C/D/E/F/G/H/I/J/K/L=1-216"/>
</dbReference>
<dbReference type="PDBsum" id="6ITZ"/>
<dbReference type="PDBsum" id="6IU0"/>
<dbReference type="PDBsum" id="8HH0"/>
<dbReference type="PDBsum" id="8HLA"/>
<dbReference type="SMR" id="Q5JF30"/>
<dbReference type="FunCoup" id="Q5JF30">
    <property type="interactions" value="25"/>
</dbReference>
<dbReference type="STRING" id="69014.TK0537"/>
<dbReference type="EnsemblBacteria" id="BAD84726">
    <property type="protein sequence ID" value="BAD84726"/>
    <property type="gene ID" value="TK0537"/>
</dbReference>
<dbReference type="GeneID" id="78447050"/>
<dbReference type="KEGG" id="tko:TK0537"/>
<dbReference type="PATRIC" id="fig|69014.16.peg.525"/>
<dbReference type="eggNOG" id="arCOG00312">
    <property type="taxonomic scope" value="Archaea"/>
</dbReference>
<dbReference type="HOGENOM" id="CLU_042529_4_4_2"/>
<dbReference type="InParanoid" id="Q5JF30"/>
<dbReference type="OrthoDB" id="6924at2157"/>
<dbReference type="PhylomeDB" id="Q5JF30"/>
<dbReference type="Proteomes" id="UP000000536">
    <property type="component" value="Chromosome"/>
</dbReference>
<dbReference type="GO" id="GO:0005829">
    <property type="term" value="C:cytosol"/>
    <property type="evidence" value="ECO:0000318"/>
    <property type="project" value="GO_Central"/>
</dbReference>
<dbReference type="GO" id="GO:0004601">
    <property type="term" value="F:peroxidase activity"/>
    <property type="evidence" value="ECO:0000318"/>
    <property type="project" value="GO_Central"/>
</dbReference>
<dbReference type="GO" id="GO:0140824">
    <property type="term" value="F:thioredoxin-dependent peroxiredoxin activity"/>
    <property type="evidence" value="ECO:0007669"/>
    <property type="project" value="UniProtKB-EC"/>
</dbReference>
<dbReference type="GO" id="GO:0045454">
    <property type="term" value="P:cell redox homeostasis"/>
    <property type="evidence" value="ECO:0000318"/>
    <property type="project" value="GO_Central"/>
</dbReference>
<dbReference type="CDD" id="cd03016">
    <property type="entry name" value="PRX_1cys"/>
    <property type="match status" value="1"/>
</dbReference>
<dbReference type="FunFam" id="3.30.1020.10:FF:000002">
    <property type="entry name" value="Peroxiredoxin"/>
    <property type="match status" value="1"/>
</dbReference>
<dbReference type="FunFam" id="3.40.30.10:FF:000011">
    <property type="entry name" value="Peroxiredoxin PRX1"/>
    <property type="match status" value="1"/>
</dbReference>
<dbReference type="Gene3D" id="3.30.1020.10">
    <property type="entry name" value="Antioxidant, Horf6, Chain A, domain2"/>
    <property type="match status" value="1"/>
</dbReference>
<dbReference type="Gene3D" id="3.40.30.10">
    <property type="entry name" value="Glutaredoxin"/>
    <property type="match status" value="1"/>
</dbReference>
<dbReference type="HAMAP" id="MF_00401">
    <property type="entry name" value="Peroxiredoxin"/>
    <property type="match status" value="1"/>
</dbReference>
<dbReference type="InterPro" id="IPR000866">
    <property type="entry name" value="AhpC/TSA"/>
</dbReference>
<dbReference type="InterPro" id="IPR050217">
    <property type="entry name" value="Peroxiredoxin"/>
</dbReference>
<dbReference type="InterPro" id="IPR024706">
    <property type="entry name" value="Peroxiredoxin_AhpC-typ"/>
</dbReference>
<dbReference type="InterPro" id="IPR019479">
    <property type="entry name" value="Peroxiredoxin_C"/>
</dbReference>
<dbReference type="InterPro" id="IPR022915">
    <property type="entry name" value="Peroxiredoxin_TDXH"/>
</dbReference>
<dbReference type="InterPro" id="IPR045020">
    <property type="entry name" value="PRX_1cys"/>
</dbReference>
<dbReference type="InterPro" id="IPR036249">
    <property type="entry name" value="Thioredoxin-like_sf"/>
</dbReference>
<dbReference type="InterPro" id="IPR013766">
    <property type="entry name" value="Thioredoxin_domain"/>
</dbReference>
<dbReference type="NCBIfam" id="NF009668">
    <property type="entry name" value="PRK13189.1"/>
    <property type="match status" value="1"/>
</dbReference>
<dbReference type="PANTHER" id="PTHR10681">
    <property type="entry name" value="THIOREDOXIN PEROXIDASE"/>
    <property type="match status" value="1"/>
</dbReference>
<dbReference type="PANTHER" id="PTHR10681:SF128">
    <property type="entry name" value="THIOREDOXIN-DEPENDENT PEROXIDE REDUCTASE, MITOCHONDRIAL"/>
    <property type="match status" value="1"/>
</dbReference>
<dbReference type="Pfam" id="PF10417">
    <property type="entry name" value="1-cysPrx_C"/>
    <property type="match status" value="1"/>
</dbReference>
<dbReference type="Pfam" id="PF00578">
    <property type="entry name" value="AhpC-TSA"/>
    <property type="match status" value="1"/>
</dbReference>
<dbReference type="PIRSF" id="PIRSF000239">
    <property type="entry name" value="AHPC"/>
    <property type="match status" value="1"/>
</dbReference>
<dbReference type="SUPFAM" id="SSF52833">
    <property type="entry name" value="Thioredoxin-like"/>
    <property type="match status" value="1"/>
</dbReference>
<dbReference type="PROSITE" id="PS51352">
    <property type="entry name" value="THIOREDOXIN_2"/>
    <property type="match status" value="1"/>
</dbReference>
<keyword id="KW-0002">3D-structure</keyword>
<keyword id="KW-0049">Antioxidant</keyword>
<keyword id="KW-0963">Cytoplasm</keyword>
<keyword id="KW-0903">Direct protein sequencing</keyword>
<keyword id="KW-1015">Disulfide bond</keyword>
<keyword id="KW-0560">Oxidoreductase</keyword>
<keyword id="KW-0575">Peroxidase</keyword>
<keyword id="KW-0676">Redox-active center</keyword>
<keyword id="KW-1185">Reference proteome</keyword>
<proteinExistence type="evidence at protein level"/>
<accession>Q5JF30</accession>
<name>TDXH_THEKO</name>
<feature type="initiator methionine" description="Removed">
    <location>
        <position position="1"/>
    </location>
</feature>
<feature type="chain" id="PRO_0000135166" description="Peroxiredoxin">
    <location>
        <begin position="2"/>
        <end position="216"/>
    </location>
</feature>
<feature type="domain" description="Thioredoxin" evidence="1">
    <location>
        <begin position="2"/>
        <end position="158"/>
    </location>
</feature>
<feature type="active site" description="Cysteine sulfenic acid (-SOH) intermediate" evidence="1">
    <location>
        <position position="46"/>
    </location>
</feature>
<feature type="binding site" evidence="1">
    <location>
        <position position="121"/>
    </location>
    <ligand>
        <name>substrate</name>
    </ligand>
</feature>
<feature type="disulfide bond" description="Interchain (with C-211); in linked form" evidence="1">
    <location>
        <position position="46"/>
    </location>
</feature>
<feature type="disulfide bond" description="Alternate" evidence="1">
    <location>
        <begin position="205"/>
        <end position="211"/>
    </location>
</feature>
<feature type="disulfide bond" description="Interchain (with C-46); in linked form" evidence="1">
    <location>
        <position position="211"/>
    </location>
</feature>
<feature type="strand" evidence="3">
    <location>
        <begin position="11"/>
        <end position="15"/>
    </location>
</feature>
<feature type="strand" evidence="3">
    <location>
        <begin position="18"/>
        <end position="22"/>
    </location>
</feature>
<feature type="helix" evidence="3">
    <location>
        <begin position="24"/>
        <end position="27"/>
    </location>
</feature>
<feature type="turn" evidence="3">
    <location>
        <begin position="28"/>
        <end position="30"/>
    </location>
</feature>
<feature type="strand" evidence="3">
    <location>
        <begin position="32"/>
        <end position="37"/>
    </location>
</feature>
<feature type="helix" evidence="3">
    <location>
        <begin position="44"/>
        <end position="54"/>
    </location>
</feature>
<feature type="helix" evidence="3">
    <location>
        <begin position="57"/>
        <end position="62"/>
    </location>
</feature>
<feature type="strand" evidence="3">
    <location>
        <begin position="65"/>
        <end position="73"/>
    </location>
</feature>
<feature type="helix" evidence="3">
    <location>
        <begin position="75"/>
        <end position="89"/>
    </location>
</feature>
<feature type="strand" evidence="3">
    <location>
        <begin position="97"/>
        <end position="99"/>
    </location>
</feature>
<feature type="helix" evidence="2">
    <location>
        <begin position="101"/>
        <end position="103"/>
    </location>
</feature>
<feature type="helix" evidence="3">
    <location>
        <begin position="104"/>
        <end position="108"/>
    </location>
</feature>
<feature type="strand" evidence="3">
    <location>
        <begin position="121"/>
        <end position="126"/>
    </location>
</feature>
<feature type="strand" evidence="3">
    <location>
        <begin position="130"/>
        <end position="138"/>
    </location>
</feature>
<feature type="helix" evidence="3">
    <location>
        <begin position="146"/>
        <end position="162"/>
    </location>
</feature>
<feature type="turn" evidence="3">
    <location>
        <begin position="168"/>
        <end position="171"/>
    </location>
</feature>
<feature type="turn" evidence="3">
    <location>
        <begin position="174"/>
        <end position="176"/>
    </location>
</feature>
<feature type="strand" evidence="2">
    <location>
        <begin position="180"/>
        <end position="182"/>
    </location>
</feature>
<feature type="helix" evidence="3">
    <location>
        <begin position="188"/>
        <end position="199"/>
    </location>
</feature>
<feature type="strand" evidence="3">
    <location>
        <begin position="204"/>
        <end position="207"/>
    </location>
</feature>
<feature type="strand" evidence="3">
    <location>
        <begin position="210"/>
        <end position="213"/>
    </location>
</feature>
<organism>
    <name type="scientific">Thermococcus kodakarensis (strain ATCC BAA-918 / JCM 12380 / KOD1)</name>
    <name type="common">Pyrococcus kodakaraensis (strain KOD1)</name>
    <dbReference type="NCBI Taxonomy" id="69014"/>
    <lineage>
        <taxon>Archaea</taxon>
        <taxon>Methanobacteriati</taxon>
        <taxon>Methanobacteriota</taxon>
        <taxon>Thermococci</taxon>
        <taxon>Thermococcales</taxon>
        <taxon>Thermococcaceae</taxon>
        <taxon>Thermococcus</taxon>
    </lineage>
</organism>